<dbReference type="EC" id="2.7.7.6" evidence="1"/>
<dbReference type="EMBL" id="EF067920">
    <property type="protein sequence ID" value="ABK20698.1"/>
    <property type="molecule type" value="Genomic_DNA"/>
</dbReference>
<dbReference type="RefSeq" id="YP_874475.1">
    <property type="nucleotide sequence ID" value="NC_008588.1"/>
</dbReference>
<dbReference type="SMR" id="A0T0K0"/>
<dbReference type="STRING" id="556484.A0T0K0"/>
<dbReference type="GeneID" id="4524650"/>
<dbReference type="InParanoid" id="A0T0K0"/>
<dbReference type="Proteomes" id="UP000000759">
    <property type="component" value="Chloroplast"/>
</dbReference>
<dbReference type="GO" id="GO:0009507">
    <property type="term" value="C:chloroplast"/>
    <property type="evidence" value="ECO:0007669"/>
    <property type="project" value="UniProtKB-SubCell"/>
</dbReference>
<dbReference type="GO" id="GO:0000428">
    <property type="term" value="C:DNA-directed RNA polymerase complex"/>
    <property type="evidence" value="ECO:0007669"/>
    <property type="project" value="UniProtKB-KW"/>
</dbReference>
<dbReference type="GO" id="GO:0005739">
    <property type="term" value="C:mitochondrion"/>
    <property type="evidence" value="ECO:0007669"/>
    <property type="project" value="GOC"/>
</dbReference>
<dbReference type="GO" id="GO:0003677">
    <property type="term" value="F:DNA binding"/>
    <property type="evidence" value="ECO:0007669"/>
    <property type="project" value="UniProtKB-UniRule"/>
</dbReference>
<dbReference type="GO" id="GO:0003899">
    <property type="term" value="F:DNA-directed RNA polymerase activity"/>
    <property type="evidence" value="ECO:0007669"/>
    <property type="project" value="UniProtKB-UniRule"/>
</dbReference>
<dbReference type="GO" id="GO:0046983">
    <property type="term" value="F:protein dimerization activity"/>
    <property type="evidence" value="ECO:0007669"/>
    <property type="project" value="InterPro"/>
</dbReference>
<dbReference type="GO" id="GO:0006351">
    <property type="term" value="P:DNA-templated transcription"/>
    <property type="evidence" value="ECO:0007669"/>
    <property type="project" value="UniProtKB-UniRule"/>
</dbReference>
<dbReference type="CDD" id="cd06928">
    <property type="entry name" value="RNAP_alpha_NTD"/>
    <property type="match status" value="1"/>
</dbReference>
<dbReference type="FunFam" id="2.170.120.12:FF:000001">
    <property type="entry name" value="DNA-directed RNA polymerase subunit alpha"/>
    <property type="match status" value="1"/>
</dbReference>
<dbReference type="Gene3D" id="1.10.150.20">
    <property type="entry name" value="5' to 3' exonuclease, C-terminal subdomain"/>
    <property type="match status" value="1"/>
</dbReference>
<dbReference type="Gene3D" id="2.170.120.12">
    <property type="entry name" value="DNA-directed RNA polymerase, insert domain"/>
    <property type="match status" value="1"/>
</dbReference>
<dbReference type="Gene3D" id="3.30.1360.10">
    <property type="entry name" value="RNA polymerase, RBP11-like subunit"/>
    <property type="match status" value="1"/>
</dbReference>
<dbReference type="HAMAP" id="MF_00059">
    <property type="entry name" value="RNApol_bact_RpoA"/>
    <property type="match status" value="1"/>
</dbReference>
<dbReference type="InterPro" id="IPR011262">
    <property type="entry name" value="DNA-dir_RNA_pol_insert"/>
</dbReference>
<dbReference type="InterPro" id="IPR011263">
    <property type="entry name" value="DNA-dir_RNA_pol_RpoA/D/Rpb3"/>
</dbReference>
<dbReference type="InterPro" id="IPR011773">
    <property type="entry name" value="DNA-dir_RpoA"/>
</dbReference>
<dbReference type="InterPro" id="IPR036603">
    <property type="entry name" value="RBP11-like"/>
</dbReference>
<dbReference type="InterPro" id="IPR011260">
    <property type="entry name" value="RNAP_asu_C"/>
</dbReference>
<dbReference type="InterPro" id="IPR036643">
    <property type="entry name" value="RNApol_insert_sf"/>
</dbReference>
<dbReference type="NCBIfam" id="NF003516">
    <property type="entry name" value="PRK05182.2-2"/>
    <property type="match status" value="1"/>
</dbReference>
<dbReference type="NCBIfam" id="NF003519">
    <property type="entry name" value="PRK05182.2-5"/>
    <property type="match status" value="1"/>
</dbReference>
<dbReference type="NCBIfam" id="TIGR02027">
    <property type="entry name" value="rpoA"/>
    <property type="match status" value="1"/>
</dbReference>
<dbReference type="Pfam" id="PF01000">
    <property type="entry name" value="RNA_pol_A_bac"/>
    <property type="match status" value="1"/>
</dbReference>
<dbReference type="Pfam" id="PF03118">
    <property type="entry name" value="RNA_pol_A_CTD"/>
    <property type="match status" value="1"/>
</dbReference>
<dbReference type="Pfam" id="PF01193">
    <property type="entry name" value="RNA_pol_L"/>
    <property type="match status" value="1"/>
</dbReference>
<dbReference type="SMART" id="SM00662">
    <property type="entry name" value="RPOLD"/>
    <property type="match status" value="1"/>
</dbReference>
<dbReference type="SUPFAM" id="SSF47789">
    <property type="entry name" value="C-terminal domain of RNA polymerase alpha subunit"/>
    <property type="match status" value="1"/>
</dbReference>
<dbReference type="SUPFAM" id="SSF56553">
    <property type="entry name" value="Insert subdomain of RNA polymerase alpha subunit"/>
    <property type="match status" value="1"/>
</dbReference>
<dbReference type="SUPFAM" id="SSF55257">
    <property type="entry name" value="RBP11-like subunits of RNA polymerase"/>
    <property type="match status" value="1"/>
</dbReference>
<comment type="function">
    <text evidence="1">DNA-dependent RNA polymerase catalyzes the transcription of DNA into RNA using the four ribonucleoside triphosphates as substrates.</text>
</comment>
<comment type="catalytic activity">
    <reaction evidence="1">
        <text>RNA(n) + a ribonucleoside 5'-triphosphate = RNA(n+1) + diphosphate</text>
        <dbReference type="Rhea" id="RHEA:21248"/>
        <dbReference type="Rhea" id="RHEA-COMP:14527"/>
        <dbReference type="Rhea" id="RHEA-COMP:17342"/>
        <dbReference type="ChEBI" id="CHEBI:33019"/>
        <dbReference type="ChEBI" id="CHEBI:61557"/>
        <dbReference type="ChEBI" id="CHEBI:140395"/>
        <dbReference type="EC" id="2.7.7.6"/>
    </reaction>
</comment>
<comment type="subunit">
    <text evidence="1">In plastids the minimal PEP RNA polymerase catalytic core is composed of four subunits: alpha, beta, beta', and beta''. When a (nuclear-encoded) sigma factor is associated with the core the holoenzyme is formed, which can initiate transcription.</text>
</comment>
<comment type="subcellular location">
    <subcellularLocation>
        <location>Plastid</location>
        <location>Chloroplast</location>
    </subcellularLocation>
</comment>
<comment type="domain">
    <text evidence="1">The N-terminal domain is essential for RNAP assembly and basal transcription, whereas the C-terminal domain is involved in interaction with transcriptional regulators and with upstream promoter elements.</text>
</comment>
<comment type="similarity">
    <text evidence="1">Belongs to the RNA polymerase alpha chain family.</text>
</comment>
<accession>A0T0K0</accession>
<protein>
    <recommendedName>
        <fullName evidence="1">DNA-directed RNA polymerase subunit alpha</fullName>
        <shortName evidence="1">PEP</shortName>
        <ecNumber evidence="1">2.7.7.6</ecNumber>
    </recommendedName>
    <alternativeName>
        <fullName evidence="1">Plastid-encoded RNA polymerase subunit alpha</fullName>
        <shortName evidence="1">RNA polymerase subunit alpha</shortName>
    </alternativeName>
</protein>
<name>RPOA_PHATC</name>
<gene>
    <name evidence="1" type="primary">rpoA</name>
</gene>
<sequence length="311" mass="34599">MNNISIKCLKSEKIQSGACHGQFLINSLNPGQGITIGNQLRRVLLGDLGGVAISAVRIAGITHEFSTIPGVREDILEILLNLKGIICTSQIQDTQFGHLKVQGPSVVTADLIQLPPGVEIINPNHYIATISTSNILEIEFKFEYGSGYHLASQNFVEEDENYLQLDTIFMPVQKVDFKIENIYDATNNISERLFLDIWTNGSISPNDALESAAQVIIDLFTLLINNKNINNNNRLELKPETISIEPYTNIAIEELQLSVRAYNCLKKAQINTVGDLLQYSPEKLQELKNFGRKSADEVFSTLKNKLGIILK</sequence>
<proteinExistence type="inferred from homology"/>
<keyword id="KW-0150">Chloroplast</keyword>
<keyword id="KW-0240">DNA-directed RNA polymerase</keyword>
<keyword id="KW-0548">Nucleotidyltransferase</keyword>
<keyword id="KW-0934">Plastid</keyword>
<keyword id="KW-1185">Reference proteome</keyword>
<keyword id="KW-0804">Transcription</keyword>
<keyword id="KW-0808">Transferase</keyword>
<evidence type="ECO:0000255" key="1">
    <source>
        <dbReference type="HAMAP-Rule" id="MF_00059"/>
    </source>
</evidence>
<feature type="chain" id="PRO_0000275697" description="DNA-directed RNA polymerase subunit alpha">
    <location>
        <begin position="1"/>
        <end position="311"/>
    </location>
</feature>
<feature type="region of interest" description="Alpha N-terminal domain (alpha-NTD)" evidence="1">
    <location>
        <begin position="1"/>
        <end position="227"/>
    </location>
</feature>
<feature type="region of interest" description="Alpha C-terminal domain (alpha-CTD)" evidence="1">
    <location>
        <begin position="242"/>
        <end position="311"/>
    </location>
</feature>
<reference key="1">
    <citation type="journal article" date="2007" name="Mol. Genet. Genomics">
        <title>Chloroplast genomes of the diatoms Phaeodactylum tricornutum and Thalassiosira pseudonana: comparison with other plastid genomes of the red lineage.</title>
        <authorList>
            <person name="Oudot-Le Secq M.-P."/>
            <person name="Grimwood J."/>
            <person name="Shapiro H."/>
            <person name="Armbrust E.V."/>
            <person name="Bowler C."/>
            <person name="Green B.R."/>
        </authorList>
    </citation>
    <scope>NUCLEOTIDE SEQUENCE [LARGE SCALE GENOMIC DNA]</scope>
    <source>
        <strain>CCAP 1055/1</strain>
    </source>
</reference>
<organism>
    <name type="scientific">Phaeodactylum tricornutum (strain CCAP 1055/1)</name>
    <dbReference type="NCBI Taxonomy" id="556484"/>
    <lineage>
        <taxon>Eukaryota</taxon>
        <taxon>Sar</taxon>
        <taxon>Stramenopiles</taxon>
        <taxon>Ochrophyta</taxon>
        <taxon>Bacillariophyta</taxon>
        <taxon>Bacillariophyceae</taxon>
        <taxon>Bacillariophycidae</taxon>
        <taxon>Naviculales</taxon>
        <taxon>Phaeodactylaceae</taxon>
        <taxon>Phaeodactylum</taxon>
    </lineage>
</organism>
<geneLocation type="chloroplast"/>